<feature type="chain" id="PRO_0000110619" description="Thermolabile glutaminase">
    <location>
        <begin position="1"/>
        <end position="309"/>
    </location>
</feature>
<feature type="binding site" evidence="1">
    <location>
        <position position="64"/>
    </location>
    <ligand>
        <name>substrate</name>
    </ligand>
</feature>
<feature type="binding site" evidence="1">
    <location>
        <position position="114"/>
    </location>
    <ligand>
        <name>substrate</name>
    </ligand>
</feature>
<feature type="binding site" evidence="1">
    <location>
        <position position="160"/>
    </location>
    <ligand>
        <name>substrate</name>
    </ligand>
</feature>
<feature type="binding site" evidence="1">
    <location>
        <position position="167"/>
    </location>
    <ligand>
        <name>substrate</name>
    </ligand>
</feature>
<feature type="binding site" evidence="1">
    <location>
        <position position="191"/>
    </location>
    <ligand>
        <name>substrate</name>
    </ligand>
</feature>
<feature type="binding site" evidence="1">
    <location>
        <position position="243"/>
    </location>
    <ligand>
        <name>substrate</name>
    </ligand>
</feature>
<feature type="binding site" evidence="1">
    <location>
        <position position="261"/>
    </location>
    <ligand>
        <name>substrate</name>
    </ligand>
</feature>
<feature type="sequence conflict" description="In Ref. 1; AAC63991." evidence="2" ref="1">
    <original>A</original>
    <variation>T</variation>
    <location>
        <position position="94"/>
    </location>
</feature>
<sequence>MADLQATLDSIYTDILPRIGEGKVADYIPELAKIDPRQFGMAIVTVDGQVFRVGDADIAFSIQSISKVFMLTLALGKVGEGLWKRVGREPSGSAFNSIVQLEHESGIPRNPFINAGAIAVTDVVMAGHAPREAIGELLRFVRYLADDESITIDDKVARSETQTGYRNVALANFMRAYRNLDHPVDHVLGVYFHQCALAMSCEQLARAGLFLAARGSNPMTGHSVVSPKRARRINALMLTCGHYDGSGDFAYHVGLPGKSGVGGGIFAVAPGIASIAVWSPGLNKVGNSQLGAVALEMLAARTGWSVFGD</sequence>
<dbReference type="EC" id="3.5.1.2"/>
<dbReference type="EMBL" id="AF057158">
    <property type="protein sequence ID" value="AAC63991.1"/>
    <property type="molecule type" value="Genomic_DNA"/>
</dbReference>
<dbReference type="EMBL" id="CP000133">
    <property type="protein sequence ID" value="ABC91091.1"/>
    <property type="molecule type" value="Genomic_DNA"/>
</dbReference>
<dbReference type="RefSeq" id="WP_011425571.1">
    <property type="nucleotide sequence ID" value="NC_007761.1"/>
</dbReference>
<dbReference type="SMR" id="O87405"/>
<dbReference type="KEGG" id="ret:RHE_CH02311"/>
<dbReference type="eggNOG" id="COG2066">
    <property type="taxonomic scope" value="Bacteria"/>
</dbReference>
<dbReference type="HOGENOM" id="CLU_027932_1_1_5"/>
<dbReference type="OrthoDB" id="9788822at2"/>
<dbReference type="Proteomes" id="UP000001936">
    <property type="component" value="Chromosome"/>
</dbReference>
<dbReference type="GO" id="GO:0004359">
    <property type="term" value="F:glutaminase activity"/>
    <property type="evidence" value="ECO:0007669"/>
    <property type="project" value="UniProtKB-UniRule"/>
</dbReference>
<dbReference type="GO" id="GO:0006537">
    <property type="term" value="P:glutamate biosynthetic process"/>
    <property type="evidence" value="ECO:0007669"/>
    <property type="project" value="TreeGrafter"/>
</dbReference>
<dbReference type="GO" id="GO:0006543">
    <property type="term" value="P:glutamine catabolic process"/>
    <property type="evidence" value="ECO:0007669"/>
    <property type="project" value="TreeGrafter"/>
</dbReference>
<dbReference type="FunFam" id="3.40.710.10:FF:000005">
    <property type="entry name" value="Glutaminase"/>
    <property type="match status" value="1"/>
</dbReference>
<dbReference type="Gene3D" id="3.40.710.10">
    <property type="entry name" value="DD-peptidase/beta-lactamase superfamily"/>
    <property type="match status" value="1"/>
</dbReference>
<dbReference type="HAMAP" id="MF_00313">
    <property type="entry name" value="Glutaminase"/>
    <property type="match status" value="1"/>
</dbReference>
<dbReference type="InterPro" id="IPR012338">
    <property type="entry name" value="Beta-lactam/transpept-like"/>
</dbReference>
<dbReference type="InterPro" id="IPR015868">
    <property type="entry name" value="Glutaminase"/>
</dbReference>
<dbReference type="NCBIfam" id="TIGR03814">
    <property type="entry name" value="Gln_ase"/>
    <property type="match status" value="1"/>
</dbReference>
<dbReference type="NCBIfam" id="NF002132">
    <property type="entry name" value="PRK00971.1-1"/>
    <property type="match status" value="1"/>
</dbReference>
<dbReference type="NCBIfam" id="NF002133">
    <property type="entry name" value="PRK00971.1-2"/>
    <property type="match status" value="1"/>
</dbReference>
<dbReference type="PANTHER" id="PTHR12544">
    <property type="entry name" value="GLUTAMINASE"/>
    <property type="match status" value="1"/>
</dbReference>
<dbReference type="PANTHER" id="PTHR12544:SF29">
    <property type="entry name" value="GLUTAMINASE"/>
    <property type="match status" value="1"/>
</dbReference>
<dbReference type="Pfam" id="PF04960">
    <property type="entry name" value="Glutaminase"/>
    <property type="match status" value="1"/>
</dbReference>
<dbReference type="SUPFAM" id="SSF56601">
    <property type="entry name" value="beta-lactamase/transpeptidase-like"/>
    <property type="match status" value="1"/>
</dbReference>
<protein>
    <recommendedName>
        <fullName>Thermolabile glutaminase</fullName>
        <ecNumber>3.5.1.2</ecNumber>
    </recommendedName>
    <alternativeName>
        <fullName>Glutaminase A</fullName>
    </alternativeName>
</protein>
<comment type="catalytic activity">
    <reaction>
        <text>L-glutamine + H2O = L-glutamate + NH4(+)</text>
        <dbReference type="Rhea" id="RHEA:15889"/>
        <dbReference type="ChEBI" id="CHEBI:15377"/>
        <dbReference type="ChEBI" id="CHEBI:28938"/>
        <dbReference type="ChEBI" id="CHEBI:29985"/>
        <dbReference type="ChEBI" id="CHEBI:58359"/>
        <dbReference type="EC" id="3.5.1.2"/>
    </reaction>
</comment>
<comment type="subunit">
    <text evidence="1">Homotetramer.</text>
</comment>
<comment type="similarity">
    <text evidence="2">Belongs to the glutaminase family.</text>
</comment>
<keyword id="KW-0378">Hydrolase</keyword>
<keyword id="KW-1185">Reference proteome</keyword>
<reference key="1">
    <citation type="journal article" date="1999" name="Biochim. Biophys. Acta">
        <title>Sequence and molecular analysis of the Rhizobium etli glsA gene, encoding a thermolabile glutaminase.</title>
        <authorList>
            <person name="Calderon J."/>
            <person name="Huerta-Saquero A."/>
            <person name="Du Pont G."/>
            <person name="Duran S."/>
        </authorList>
    </citation>
    <scope>NUCLEOTIDE SEQUENCE [GENOMIC DNA]</scope>
</reference>
<reference key="2">
    <citation type="journal article" date="2006" name="Proc. Natl. Acad. Sci. U.S.A.">
        <title>The partitioned Rhizobium etli genome: genetic and metabolic redundancy in seven interacting replicons.</title>
        <authorList>
            <person name="Gonzalez V."/>
            <person name="Santamaria R.I."/>
            <person name="Bustos P."/>
            <person name="Hernandez-Gonzalez I."/>
            <person name="Medrano-Soto A."/>
            <person name="Moreno-Hagelsieb G."/>
            <person name="Janga S.C."/>
            <person name="Ramirez M.A."/>
            <person name="Jimenez-Jacinto V."/>
            <person name="Collado-Vides J."/>
            <person name="Davila G."/>
        </authorList>
    </citation>
    <scope>NUCLEOTIDE SEQUENCE [LARGE SCALE GENOMIC DNA]</scope>
    <source>
        <strain>ATCC 51251 / DSM 11541 / JCM 21823 / NBRC 15573 / CFN 42</strain>
    </source>
</reference>
<reference key="3">
    <citation type="journal article" date="1996" name="Biochem. Genet.">
        <title>Identification of two glutaminases in Rhizobium etli.</title>
        <authorList>
            <person name="Duran S."/>
            <person name="Sanchez-Linares L."/>
            <person name="Huerta-Saquero A."/>
            <person name="Du Pont G."/>
            <person name="Huerta-Zepeda A."/>
            <person name="Calderon J."/>
        </authorList>
    </citation>
    <scope>CHARACTERIZATION</scope>
</reference>
<accession>O87405</accession>
<accession>Q2K7U5</accession>
<name>GLSA_RHIEC</name>
<proteinExistence type="evidence at protein level"/>
<organism>
    <name type="scientific">Rhizobium etli (strain ATCC 51251 / DSM 11541 / JCM 21823 / NBRC 15573 / CFN 42)</name>
    <dbReference type="NCBI Taxonomy" id="347834"/>
    <lineage>
        <taxon>Bacteria</taxon>
        <taxon>Pseudomonadati</taxon>
        <taxon>Pseudomonadota</taxon>
        <taxon>Alphaproteobacteria</taxon>
        <taxon>Hyphomicrobiales</taxon>
        <taxon>Rhizobiaceae</taxon>
        <taxon>Rhizobium/Agrobacterium group</taxon>
        <taxon>Rhizobium</taxon>
    </lineage>
</organism>
<gene>
    <name type="primary">glsA</name>
    <name type="ordered locus">RHE_CH02311</name>
</gene>
<evidence type="ECO:0000250" key="1"/>
<evidence type="ECO:0000305" key="2"/>